<accession>P85509</accession>
<feature type="chain" id="PRO_0000353204" description="Calcium-binding shell glycoprotein P50">
    <location>
        <begin position="1" status="less than"/>
        <end position="24" status="greater than"/>
    </location>
</feature>
<feature type="region of interest" description="Disordered" evidence="1">
    <location>
        <begin position="1"/>
        <end position="24"/>
    </location>
</feature>
<feature type="unsure residue" description="L or I">
    <location>
        <position position="4"/>
    </location>
</feature>
<feature type="non-consecutive residues" evidence="4">
    <location>
        <begin position="12"/>
        <end position="13"/>
    </location>
</feature>
<feature type="non-terminal residue">
    <location>
        <position position="1"/>
    </location>
</feature>
<feature type="non-terminal residue">
    <location>
        <position position="24"/>
    </location>
</feature>
<proteinExistence type="evidence at protein level"/>
<dbReference type="GO" id="GO:0005509">
    <property type="term" value="F:calcium ion binding"/>
    <property type="evidence" value="ECO:0000314"/>
    <property type="project" value="UniProtKB"/>
</dbReference>
<dbReference type="GO" id="GO:0031215">
    <property type="term" value="P:shell calcification"/>
    <property type="evidence" value="ECO:0000314"/>
    <property type="project" value="UniProtKB"/>
</dbReference>
<sequence length="24" mass="2815">KDALEHTGFAPKKDGEEHVEWNYN</sequence>
<protein>
    <recommendedName>
        <fullName>Calcium-binding shell glycoprotein P50</fullName>
    </recommendedName>
</protein>
<evidence type="ECO:0000256" key="1">
    <source>
        <dbReference type="SAM" id="MobiDB-lite"/>
    </source>
</evidence>
<evidence type="ECO:0000269" key="2">
    <source>
    </source>
</evidence>
<evidence type="ECO:0000269" key="3">
    <source>
    </source>
</evidence>
<evidence type="ECO:0000305" key="4"/>
<name>CBG50_UNIPI</name>
<comment type="function">
    <text evidence="2 3">Calcium-binding.</text>
</comment>
<comment type="tissue specificity">
    <text evidence="2 3">Nacreous and prismatic layers of the shell.</text>
</comment>
<comment type="PTM">
    <text evidence="2 3">Glycosylated.</text>
</comment>
<comment type="miscellaneous">
    <text>On the 2D-gel the determined pI of this protein is: 5.6 and 6.7, its MW is: 50 kDa.</text>
</comment>
<keyword id="KW-0106">Calcium</keyword>
<keyword id="KW-0903">Direct protein sequencing</keyword>
<keyword id="KW-0325">Glycoprotein</keyword>
<reference key="1">
    <citation type="journal article" date="2008" name="ChemBioChem">
        <title>Nacre calcification in the freshwater mussel Unio pictorum: carbonic anhydrase activity and purification of a 95 kDa calcium-binding glycoprotein.</title>
        <authorList>
            <person name="Marie B."/>
            <person name="Luquet G."/>
            <person name="Bedouet L."/>
            <person name="Milet C."/>
            <person name="Guichard N."/>
            <person name="Medakovic D."/>
            <person name="Marin F."/>
        </authorList>
    </citation>
    <scope>PROTEIN SEQUENCE</scope>
    <scope>FUNCTION</scope>
    <scope>TISSUE SPECIFICITY</scope>
    <scope>GLYCOSYLATION</scope>
    <source>
        <tissue>Shell</tissue>
    </source>
</reference>
<reference evidence="4" key="2">
    <citation type="journal article" date="2007" name="FEBS J.">
        <title>The shell matrix of the freshwater mussel Unio pictorum (Paleoheterodonta, Unionoida). Involvement of acidic polysaccharides from glycoproteins in nacre mineralization.</title>
        <authorList>
            <person name="Marie B."/>
            <person name="Luquet G."/>
            <person name="Pais De Barros J.-P."/>
            <person name="Guichard N."/>
            <person name="Morel S."/>
            <person name="Alcaraz G."/>
            <person name="Bollache L."/>
            <person name="Marin F."/>
        </authorList>
    </citation>
    <scope>IDENTIFICATION</scope>
    <scope>FUNCTION</scope>
    <scope>TISSUE SPECIFICITY</scope>
    <scope>GLYCOSYLATION</scope>
</reference>
<organism>
    <name type="scientific">Unio pictorum</name>
    <name type="common">Painter's mussel</name>
    <dbReference type="NCBI Taxonomy" id="55837"/>
    <lineage>
        <taxon>Eukaryota</taxon>
        <taxon>Metazoa</taxon>
        <taxon>Spiralia</taxon>
        <taxon>Lophotrochozoa</taxon>
        <taxon>Mollusca</taxon>
        <taxon>Bivalvia</taxon>
        <taxon>Autobranchia</taxon>
        <taxon>Heteroconchia</taxon>
        <taxon>Palaeoheterodonta</taxon>
        <taxon>Unionida</taxon>
        <taxon>Unionoidea</taxon>
        <taxon>Unionidae</taxon>
        <taxon>Unioninae</taxon>
        <taxon>Unio</taxon>
    </lineage>
</organism>